<accession>Q4KHY5</accession>
<sequence>MQSTDLKRLLIPSLLGLAIVTGSAQAAAPLRPPQGYYAPVDKFKSGDNSEGCDAMPAPYTGALQFRSKYEGSDKARATLNVQSEQAFRDTTADITKIERGTSKRVMQFMRDGRPEQLDCTLAWLSAWAQADALMSKDFNHTGKSMRKWALGSMASAYLRLKFSDSHPLATHQEQAQKIEAWFSKMADQVVSDWDNLPLDKTNNHSYWAAWSVMATAVATNRRDLFDWAVKEYKVGANQVDADGFLPNELKRQQRALAYHNYALPPLAMIASFAQVNGVDLRQENHEALKRLGERVLAGVKDPDTFEKKNGKQQDMTDLKVDSKFAWLEPYCSLYTCAPETLERKHKMQPFKTFRLGGDLTKVYDPAHEKGS</sequence>
<dbReference type="EC" id="4.2.2.3" evidence="1"/>
<dbReference type="EMBL" id="CP000076">
    <property type="protein sequence ID" value="AAY90304.1"/>
    <property type="molecule type" value="Genomic_DNA"/>
</dbReference>
<dbReference type="RefSeq" id="WP_011059370.1">
    <property type="nucleotide sequence ID" value="NC_004129.6"/>
</dbReference>
<dbReference type="SMR" id="Q4KHY5"/>
<dbReference type="STRING" id="220664.PFL_1017"/>
<dbReference type="CAZy" id="PL5">
    <property type="family name" value="Polysaccharide Lyase Family 5"/>
</dbReference>
<dbReference type="GeneID" id="57474022"/>
<dbReference type="KEGG" id="pfl:PFL_1017"/>
<dbReference type="PATRIC" id="fig|220664.5.peg.1043"/>
<dbReference type="eggNOG" id="ENOG502ZAMJ">
    <property type="taxonomic scope" value="Bacteria"/>
</dbReference>
<dbReference type="HOGENOM" id="CLU_064286_0_0_6"/>
<dbReference type="Proteomes" id="UP000008540">
    <property type="component" value="Chromosome"/>
</dbReference>
<dbReference type="GO" id="GO:0042597">
    <property type="term" value="C:periplasmic space"/>
    <property type="evidence" value="ECO:0007669"/>
    <property type="project" value="UniProtKB-SubCell"/>
</dbReference>
<dbReference type="GO" id="GO:0045135">
    <property type="term" value="F:poly(beta-D-mannuronate) lyase activity"/>
    <property type="evidence" value="ECO:0007669"/>
    <property type="project" value="UniProtKB-UniRule"/>
</dbReference>
<dbReference type="GO" id="GO:0042122">
    <property type="term" value="P:alginic acid catabolic process"/>
    <property type="evidence" value="ECO:0007669"/>
    <property type="project" value="UniProtKB-UniRule"/>
</dbReference>
<dbReference type="CDD" id="cd00244">
    <property type="entry name" value="AlgLyase"/>
    <property type="match status" value="1"/>
</dbReference>
<dbReference type="Gene3D" id="1.50.10.100">
    <property type="entry name" value="Chondroitin AC/alginate lyase"/>
    <property type="match status" value="1"/>
</dbReference>
<dbReference type="HAMAP" id="MF_00557">
    <property type="entry name" value="Alginate_lyase"/>
    <property type="match status" value="1"/>
</dbReference>
<dbReference type="InterPro" id="IPR022859">
    <property type="entry name" value="Alginate_lyase"/>
</dbReference>
<dbReference type="InterPro" id="IPR008397">
    <property type="entry name" value="Alginate_lyase_dom"/>
</dbReference>
<dbReference type="InterPro" id="IPR008929">
    <property type="entry name" value="Chondroitin_lyas"/>
</dbReference>
<dbReference type="NCBIfam" id="NF001467">
    <property type="entry name" value="PRK00325.1-2"/>
    <property type="match status" value="1"/>
</dbReference>
<dbReference type="NCBIfam" id="NF001468">
    <property type="entry name" value="PRK00325.1-3"/>
    <property type="match status" value="1"/>
</dbReference>
<dbReference type="Pfam" id="PF05426">
    <property type="entry name" value="Alginate_lyase"/>
    <property type="match status" value="1"/>
</dbReference>
<dbReference type="SUPFAM" id="SSF48230">
    <property type="entry name" value="Chondroitin AC/alginate lyase"/>
    <property type="match status" value="1"/>
</dbReference>
<gene>
    <name evidence="1" type="primary">algL</name>
    <name type="ordered locus">PFL_1017</name>
</gene>
<reference key="1">
    <citation type="journal article" date="2005" name="Nat. Biotechnol.">
        <title>Complete genome sequence of the plant commensal Pseudomonas fluorescens Pf-5.</title>
        <authorList>
            <person name="Paulsen I.T."/>
            <person name="Press C.M."/>
            <person name="Ravel J."/>
            <person name="Kobayashi D.Y."/>
            <person name="Myers G.S.A."/>
            <person name="Mavrodi D.V."/>
            <person name="DeBoy R.T."/>
            <person name="Seshadri R."/>
            <person name="Ren Q."/>
            <person name="Madupu R."/>
            <person name="Dodson R.J."/>
            <person name="Durkin A.S."/>
            <person name="Brinkac L.M."/>
            <person name="Daugherty S.C."/>
            <person name="Sullivan S.A."/>
            <person name="Rosovitz M.J."/>
            <person name="Gwinn M.L."/>
            <person name="Zhou L."/>
            <person name="Schneider D.J."/>
            <person name="Cartinhour S.W."/>
            <person name="Nelson W.C."/>
            <person name="Weidman J."/>
            <person name="Watkins K."/>
            <person name="Tran K."/>
            <person name="Khouri H."/>
            <person name="Pierson E.A."/>
            <person name="Pierson L.S. III"/>
            <person name="Thomashow L.S."/>
            <person name="Loper J.E."/>
        </authorList>
    </citation>
    <scope>NUCLEOTIDE SEQUENCE [LARGE SCALE GENOMIC DNA]</scope>
    <source>
        <strain>ATCC BAA-477 / NRRL B-23932 / Pf-5</strain>
    </source>
</reference>
<feature type="signal peptide" evidence="1">
    <location>
        <begin position="1"/>
        <end position="26"/>
    </location>
</feature>
<feature type="chain" id="PRO_1000061112" description="Alginate lyase">
    <location>
        <begin position="27"/>
        <end position="371"/>
    </location>
</feature>
<feature type="binding site" evidence="1">
    <location>
        <begin position="67"/>
        <end position="68"/>
    </location>
    <ligand>
        <name>substrate</name>
    </ligand>
</feature>
<feature type="binding site" evidence="1">
    <location>
        <begin position="140"/>
        <end position="141"/>
    </location>
    <ligand>
        <name>substrate</name>
    </ligand>
</feature>
<feature type="binding site" evidence="1">
    <location>
        <position position="258"/>
    </location>
    <ligand>
        <name>substrate</name>
    </ligand>
</feature>
<name>ALGL_PSEF5</name>
<proteinExistence type="inferred from homology"/>
<protein>
    <recommendedName>
        <fullName evidence="1">Alginate lyase</fullName>
        <ecNumber evidence="1">4.2.2.3</ecNumber>
    </recommendedName>
    <alternativeName>
        <fullName evidence="1">Poly(beta-D-mannuronate) lyase</fullName>
    </alternativeName>
</protein>
<comment type="function">
    <text evidence="1">Catalyzes the depolymerization of alginate by cleaving the beta-1,4 glycosidic bond between two adjacent sugar residues via a beta-elimination mechanism. May serve to degrade mislocalized alginate that is trapped in the periplasmic space.</text>
</comment>
<comment type="catalytic activity">
    <reaction evidence="1">
        <text>Eliminative cleavage of alginate to give oligosaccharides with 4-deoxy-alpha-L-erythro-hex-4-enuronosyl groups at their non-reducing ends and beta-D-mannuronate at their reducing end.</text>
        <dbReference type="EC" id="4.2.2.3"/>
    </reaction>
</comment>
<comment type="subcellular location">
    <subcellularLocation>
        <location evidence="1">Periplasm</location>
    </subcellularLocation>
</comment>
<comment type="similarity">
    <text evidence="1">Belongs to the polysaccharide lyase 5 family.</text>
</comment>
<keyword id="KW-0456">Lyase</keyword>
<keyword id="KW-0574">Periplasm</keyword>
<keyword id="KW-0732">Signal</keyword>
<organism>
    <name type="scientific">Pseudomonas fluorescens (strain ATCC BAA-477 / NRRL B-23932 / Pf-5)</name>
    <dbReference type="NCBI Taxonomy" id="220664"/>
    <lineage>
        <taxon>Bacteria</taxon>
        <taxon>Pseudomonadati</taxon>
        <taxon>Pseudomonadota</taxon>
        <taxon>Gammaproteobacteria</taxon>
        <taxon>Pseudomonadales</taxon>
        <taxon>Pseudomonadaceae</taxon>
        <taxon>Pseudomonas</taxon>
    </lineage>
</organism>
<evidence type="ECO:0000255" key="1">
    <source>
        <dbReference type="HAMAP-Rule" id="MF_00557"/>
    </source>
</evidence>